<keyword id="KW-0032">Aminotransferase</keyword>
<keyword id="KW-0073">Auxin biosynthesis</keyword>
<keyword id="KW-0663">Pyridoxal phosphate</keyword>
<keyword id="KW-1185">Reference proteome</keyword>
<keyword id="KW-0808">Transferase</keyword>
<accession>Q0DKE8</accession>
<accession>A0A0P0WIM5</accession>
<protein>
    <recommendedName>
        <fullName evidence="5">Tryptophan aminotransferase-related protein 1</fullName>
        <shortName evidence="5">OsTAR1</shortName>
        <ecNumber evidence="7">2.6.1.27</ecNumber>
    </recommendedName>
    <alternativeName>
        <fullName evidence="6">Protein FISH BONE-LIKE</fullName>
        <shortName evidence="6">Protein FIB-LIKE</shortName>
    </alternativeName>
</protein>
<comment type="function">
    <text evidence="8">Probable tryptophan aminotransferase that may be involved in the regulation of auxin production in developing rice grains.</text>
</comment>
<comment type="catalytic activity">
    <reaction evidence="7">
        <text>L-tryptophan + 2-oxoglutarate = indole-3-pyruvate + L-glutamate</text>
        <dbReference type="Rhea" id="RHEA:14093"/>
        <dbReference type="ChEBI" id="CHEBI:16810"/>
        <dbReference type="ChEBI" id="CHEBI:17640"/>
        <dbReference type="ChEBI" id="CHEBI:29985"/>
        <dbReference type="ChEBI" id="CHEBI:57912"/>
        <dbReference type="EC" id="2.6.1.27"/>
    </reaction>
</comment>
<comment type="cofactor">
    <cofactor evidence="1">
        <name>pyridoxal 5'-phosphate</name>
        <dbReference type="ChEBI" id="CHEBI:597326"/>
    </cofactor>
</comment>
<comment type="pathway">
    <text evidence="7">Plant hormone metabolism; auxin biosynthesis.</text>
</comment>
<comment type="tissue specificity">
    <text evidence="4">Highly expressed in anthers. Expressed at low levels in ovaries.</text>
</comment>
<comment type="developmental stage">
    <text evidence="3">During grain filling, expression increases from 4 to 20 days after pollination and then decreases to basal levels.</text>
</comment>
<comment type="similarity">
    <text evidence="7">Belongs to the alliinase family.</text>
</comment>
<comment type="sequence caution" evidence="7">
    <conflict type="erroneous gene model prediction">
        <sequence resource="EMBL-CDS" id="BAS92467"/>
    </conflict>
</comment>
<dbReference type="EC" id="2.6.1.27" evidence="7"/>
<dbReference type="EMBL" id="AC084817">
    <property type="status" value="NOT_ANNOTATED_CDS"/>
    <property type="molecule type" value="Genomic_DNA"/>
</dbReference>
<dbReference type="EMBL" id="AP008211">
    <property type="protein sequence ID" value="BAF16675.1"/>
    <property type="molecule type" value="Genomic_DNA"/>
</dbReference>
<dbReference type="EMBL" id="AK071687">
    <property type="protein sequence ID" value="BAG92630.1"/>
    <property type="molecule type" value="mRNA"/>
</dbReference>
<dbReference type="EMBL" id="AP014961">
    <property type="protein sequence ID" value="BAS92466.1"/>
    <property type="molecule type" value="Genomic_DNA"/>
</dbReference>
<dbReference type="EMBL" id="AP014961">
    <property type="protein sequence ID" value="BAS92467.1"/>
    <property type="status" value="ALT_SEQ"/>
    <property type="molecule type" value="Genomic_DNA"/>
</dbReference>
<dbReference type="SMR" id="Q0DKE8"/>
<dbReference type="FunCoup" id="Q0DKE8">
    <property type="interactions" value="598"/>
</dbReference>
<dbReference type="STRING" id="39947.Q0DKE8"/>
<dbReference type="PaxDb" id="39947-Q0DKE8"/>
<dbReference type="EnsemblPlants" id="Os05t0169300-01">
    <property type="protein sequence ID" value="Os05t0169300-01"/>
    <property type="gene ID" value="Os05g0169300"/>
</dbReference>
<dbReference type="Gramene" id="Os05t0169300-01">
    <property type="protein sequence ID" value="Os05t0169300-01"/>
    <property type="gene ID" value="Os05g0169300"/>
</dbReference>
<dbReference type="KEGG" id="dosa:Os05g0169300"/>
<dbReference type="KEGG" id="osa:4337930"/>
<dbReference type="eggNOG" id="ENOG502QPYC">
    <property type="taxonomic scope" value="Eukaryota"/>
</dbReference>
<dbReference type="HOGENOM" id="CLU_036760_1_0_1"/>
<dbReference type="InParanoid" id="Q0DKE8"/>
<dbReference type="OMA" id="VGSLCWF"/>
<dbReference type="OrthoDB" id="2020362at2759"/>
<dbReference type="PlantReactome" id="R-OSA-1119486">
    <property type="pathway name" value="IAA biosynthesis I"/>
</dbReference>
<dbReference type="UniPathway" id="UPA00151"/>
<dbReference type="Proteomes" id="UP000000763">
    <property type="component" value="Chromosome 5"/>
</dbReference>
<dbReference type="Proteomes" id="UP000059680">
    <property type="component" value="Chromosome 5"/>
</dbReference>
<dbReference type="GO" id="GO:0016846">
    <property type="term" value="F:carbon-sulfur lyase activity"/>
    <property type="evidence" value="ECO:0007669"/>
    <property type="project" value="InterPro"/>
</dbReference>
<dbReference type="GO" id="GO:0050362">
    <property type="term" value="F:L-tryptophan:2-oxoglutarate aminotransferase activity"/>
    <property type="evidence" value="ECO:0007669"/>
    <property type="project" value="UniProtKB-EC"/>
</dbReference>
<dbReference type="GO" id="GO:0008483">
    <property type="term" value="F:transaminase activity"/>
    <property type="evidence" value="ECO:0000318"/>
    <property type="project" value="GO_Central"/>
</dbReference>
<dbReference type="GO" id="GO:0006520">
    <property type="term" value="P:amino acid metabolic process"/>
    <property type="evidence" value="ECO:0000318"/>
    <property type="project" value="GO_Central"/>
</dbReference>
<dbReference type="GO" id="GO:0009851">
    <property type="term" value="P:auxin biosynthetic process"/>
    <property type="evidence" value="ECO:0007669"/>
    <property type="project" value="UniProtKB-UniPathway"/>
</dbReference>
<dbReference type="CDD" id="cd00609">
    <property type="entry name" value="AAT_like"/>
    <property type="match status" value="1"/>
</dbReference>
<dbReference type="Gene3D" id="3.90.1150.10">
    <property type="entry name" value="Aspartate Aminotransferase, domain 1"/>
    <property type="match status" value="1"/>
</dbReference>
<dbReference type="Gene3D" id="2.10.25.30">
    <property type="entry name" value="EGF-like, alliinase"/>
    <property type="match status" value="1"/>
</dbReference>
<dbReference type="Gene3D" id="3.40.640.10">
    <property type="entry name" value="Type I PLP-dependent aspartate aminotransferase-like (Major domain)"/>
    <property type="match status" value="1"/>
</dbReference>
<dbReference type="InterPro" id="IPR006948">
    <property type="entry name" value="Alliinase_C"/>
</dbReference>
<dbReference type="InterPro" id="IPR037029">
    <property type="entry name" value="Alliinase_N_sf"/>
</dbReference>
<dbReference type="InterPro" id="IPR050478">
    <property type="entry name" value="Ethylene_sulfur-biosynth"/>
</dbReference>
<dbReference type="InterPro" id="IPR015424">
    <property type="entry name" value="PyrdxlP-dep_Trfase"/>
</dbReference>
<dbReference type="InterPro" id="IPR015421">
    <property type="entry name" value="PyrdxlP-dep_Trfase_major"/>
</dbReference>
<dbReference type="InterPro" id="IPR015422">
    <property type="entry name" value="PyrdxlP-dep_Trfase_small"/>
</dbReference>
<dbReference type="PANTHER" id="PTHR43795">
    <property type="entry name" value="BIFUNCTIONAL ASPARTATE AMINOTRANSFERASE AND GLUTAMATE/ASPARTATE-PREPHENATE AMINOTRANSFERASE-RELATED"/>
    <property type="match status" value="1"/>
</dbReference>
<dbReference type="PANTHER" id="PTHR43795:SF22">
    <property type="entry name" value="TRYPTOPHAN AMINOTRANSFERASE-RELATED PROTEIN 2"/>
    <property type="match status" value="1"/>
</dbReference>
<dbReference type="Pfam" id="PF04864">
    <property type="entry name" value="Alliinase_C"/>
    <property type="match status" value="1"/>
</dbReference>
<dbReference type="SUPFAM" id="SSF53383">
    <property type="entry name" value="PLP-dependent transferases"/>
    <property type="match status" value="1"/>
</dbReference>
<feature type="chain" id="PRO_0000444623" description="Tryptophan aminotransferase-related protein 1">
    <location>
        <begin position="1"/>
        <end position="441"/>
    </location>
</feature>
<feature type="binding site" evidence="1">
    <location>
        <position position="110"/>
    </location>
    <ligand>
        <name>pyridoxal 5'-phosphate</name>
        <dbReference type="ChEBI" id="CHEBI:597326"/>
    </ligand>
</feature>
<feature type="binding site" evidence="1">
    <location>
        <begin position="152"/>
        <end position="153"/>
    </location>
    <ligand>
        <name>pyridoxal 5'-phosphate</name>
        <dbReference type="ChEBI" id="CHEBI:597326"/>
    </ligand>
</feature>
<feature type="binding site" evidence="1">
    <location>
        <position position="219"/>
    </location>
    <ligand>
        <name>pyridoxal 5'-phosphate</name>
        <dbReference type="ChEBI" id="CHEBI:597326"/>
    </ligand>
</feature>
<feature type="binding site" evidence="1">
    <location>
        <begin position="239"/>
        <end position="242"/>
    </location>
    <ligand>
        <name>pyridoxal 5'-phosphate</name>
        <dbReference type="ChEBI" id="CHEBI:597326"/>
    </ligand>
</feature>
<feature type="binding site" evidence="1">
    <location>
        <begin position="262"/>
        <end position="265"/>
    </location>
    <ligand>
        <name>pyridoxal 5'-phosphate</name>
        <dbReference type="ChEBI" id="CHEBI:597326"/>
    </ligand>
</feature>
<feature type="binding site" evidence="1">
    <location>
        <position position="273"/>
    </location>
    <ligand>
        <name>pyridoxal 5'-phosphate</name>
        <dbReference type="ChEBI" id="CHEBI:597326"/>
    </ligand>
</feature>
<feature type="modified residue" description="N6-(pyridoxal phosphate)lysine" evidence="2">
    <location>
        <position position="265"/>
    </location>
</feature>
<sequence>MAAMGSKDGGGGGGGMAAQAGRLGVVASVAFNLAALAFYLRRRYFGGDDAAAVRKKAEAEVAPSSGKPPVTKDSIINLDHGDPTMYEAFWRGGAGERATIVIPGWQTMSYFSDVGSLCWFLEPGLEREVRRLHRLVGNAVADGYHVLVGTGSTQLFQAALYALSPPGPSAPMNVVSPAPYYSSYPAVTDFLKSGLYRWAGDAKMFDGDTYVELVCSPSNPDGGIREAVLKSGDGVAVHDLAYYWPQYTPITSAAAHDIMLFTVSKCTGHAGTRLGWALVKDRAVAQKMSKFIELNTIGVSKDSQLRAAKILKAITDGYDRAPAAGDDDDDSSRLFHFARRKMVSRWAKLRAAVAASGIFTLPDELPGHCTFANETVSAYPPFAWLRCGKEGVDDLEGYLRERKIISRGGGKFGADGRVVRISMLDTDEAFAIFVDRLAAMN</sequence>
<organism>
    <name type="scientific">Oryza sativa subsp. japonica</name>
    <name type="common">Rice</name>
    <dbReference type="NCBI Taxonomy" id="39947"/>
    <lineage>
        <taxon>Eukaryota</taxon>
        <taxon>Viridiplantae</taxon>
        <taxon>Streptophyta</taxon>
        <taxon>Embryophyta</taxon>
        <taxon>Tracheophyta</taxon>
        <taxon>Spermatophyta</taxon>
        <taxon>Magnoliopsida</taxon>
        <taxon>Liliopsida</taxon>
        <taxon>Poales</taxon>
        <taxon>Poaceae</taxon>
        <taxon>BOP clade</taxon>
        <taxon>Oryzoideae</taxon>
        <taxon>Oryzeae</taxon>
        <taxon>Oryzinae</taxon>
        <taxon>Oryza</taxon>
        <taxon>Oryza sativa</taxon>
    </lineage>
</organism>
<evidence type="ECO:0000250" key="1">
    <source>
        <dbReference type="UniProtKB" id="Q9S7N2"/>
    </source>
</evidence>
<evidence type="ECO:0000255" key="2"/>
<evidence type="ECO:0000269" key="3">
    <source>
    </source>
</evidence>
<evidence type="ECO:0000269" key="4">
    <source>
    </source>
</evidence>
<evidence type="ECO:0000303" key="5">
    <source>
    </source>
</evidence>
<evidence type="ECO:0000303" key="6">
    <source>
    </source>
</evidence>
<evidence type="ECO:0000305" key="7"/>
<evidence type="ECO:0000305" key="8">
    <source>
    </source>
</evidence>
<evidence type="ECO:0000312" key="9">
    <source>
        <dbReference type="EMBL" id="BAF16675.1"/>
    </source>
</evidence>
<name>TAR1_ORYSJ</name>
<reference key="1">
    <citation type="journal article" date="2005" name="Mol. Genet. Genomics">
        <title>A fine physical map of the rice chromosome 5.</title>
        <authorList>
            <person name="Cheng C.-H."/>
            <person name="Chung M.C."/>
            <person name="Liu S.-M."/>
            <person name="Chen S.-K."/>
            <person name="Kao F.Y."/>
            <person name="Lin S.-J."/>
            <person name="Hsiao S.-H."/>
            <person name="Tseng I.C."/>
            <person name="Hsing Y.-I.C."/>
            <person name="Wu H.-P."/>
            <person name="Chen C.-S."/>
            <person name="Shaw J.-F."/>
            <person name="Wu J."/>
            <person name="Matsumoto T."/>
            <person name="Sasaki T."/>
            <person name="Chen H.-C."/>
            <person name="Chow T.-Y."/>
        </authorList>
    </citation>
    <scope>NUCLEOTIDE SEQUENCE [LARGE SCALE GENOMIC DNA]</scope>
    <source>
        <strain>cv. Nipponbare</strain>
    </source>
</reference>
<reference key="2">
    <citation type="journal article" date="2005" name="Nature">
        <title>The map-based sequence of the rice genome.</title>
        <authorList>
            <consortium name="International rice genome sequencing project (IRGSP)"/>
        </authorList>
    </citation>
    <scope>NUCLEOTIDE SEQUENCE [LARGE SCALE GENOMIC DNA]</scope>
    <source>
        <strain>cv. Nipponbare</strain>
    </source>
</reference>
<reference key="3">
    <citation type="journal article" date="2008" name="Nucleic Acids Res.">
        <title>The rice annotation project database (RAP-DB): 2008 update.</title>
        <authorList>
            <consortium name="The rice annotation project (RAP)"/>
        </authorList>
    </citation>
    <scope>GENOME REANNOTATION</scope>
    <source>
        <strain>cv. Nipponbare</strain>
    </source>
</reference>
<reference key="4">
    <citation type="journal article" date="2013" name="Rice">
        <title>Improvement of the Oryza sativa Nipponbare reference genome using next generation sequence and optical map data.</title>
        <authorList>
            <person name="Kawahara Y."/>
            <person name="de la Bastide M."/>
            <person name="Hamilton J.P."/>
            <person name="Kanamori H."/>
            <person name="McCombie W.R."/>
            <person name="Ouyang S."/>
            <person name="Schwartz D.C."/>
            <person name="Tanaka T."/>
            <person name="Wu J."/>
            <person name="Zhou S."/>
            <person name="Childs K.L."/>
            <person name="Davidson R.M."/>
            <person name="Lin H."/>
            <person name="Quesada-Ocampo L."/>
            <person name="Vaillancourt B."/>
            <person name="Sakai H."/>
            <person name="Lee S.S."/>
            <person name="Kim J."/>
            <person name="Numa H."/>
            <person name="Itoh T."/>
            <person name="Buell C.R."/>
            <person name="Matsumoto T."/>
        </authorList>
    </citation>
    <scope>GENOME REANNOTATION</scope>
    <source>
        <strain>cv. Nipponbare</strain>
    </source>
</reference>
<reference key="5">
    <citation type="journal article" date="2003" name="Science">
        <title>Collection, mapping, and annotation of over 28,000 cDNA clones from japonica rice.</title>
        <authorList>
            <consortium name="The rice full-length cDNA consortium"/>
        </authorList>
    </citation>
    <scope>NUCLEOTIDE SEQUENCE [LARGE SCALE MRNA]</scope>
    <source>
        <strain>cv. Nipponbare</strain>
    </source>
</reference>
<reference key="6">
    <citation type="journal article" date="2012" name="Physiol. Plantarum">
        <title>A large increase in IAA during development of rice grains correlates with the expression of tryptophan aminotransferase OsTAR1 and a grain-specific YUCCA.</title>
        <authorList>
            <person name="Abu-Zaitoon Y.M."/>
            <person name="Bennett K."/>
            <person name="Normanly J."/>
            <person name="Nonhebel H.M."/>
        </authorList>
    </citation>
    <scope>FUNCTION</scope>
    <scope>DEVELOPMENTAL STAGE</scope>
</reference>
<reference key="7">
    <citation type="journal article" date="2014" name="Plant J.">
        <title>The rice FISH BONE gene encodes a tryptophan aminotransferase, which affects pleiotropic auxin-related processes.</title>
        <authorList>
            <person name="Yoshikawa T."/>
            <person name="Ito M."/>
            <person name="Sumikura T."/>
            <person name="Nakayama A."/>
            <person name="Nishimura T."/>
            <person name="Kitano H."/>
            <person name="Yamaguchi I."/>
            <person name="Koshiba T."/>
            <person name="Hibara K."/>
            <person name="Nagato Y."/>
            <person name="Itoh J."/>
        </authorList>
    </citation>
    <scope>TISSUE SPECIFICITY</scope>
</reference>
<proteinExistence type="evidence at transcript level"/>
<gene>
    <name evidence="5" type="primary">TAR1</name>
    <name evidence="6" type="synonym">FBL</name>
    <name evidence="9" type="ordered locus">Os05g0169300</name>
    <name evidence="7" type="ordered locus">LOC_Os05g07720</name>
</gene>